<organism>
    <name type="scientific">Arabidopsis thaliana</name>
    <name type="common">Mouse-ear cress</name>
    <dbReference type="NCBI Taxonomy" id="3702"/>
    <lineage>
        <taxon>Eukaryota</taxon>
        <taxon>Viridiplantae</taxon>
        <taxon>Streptophyta</taxon>
        <taxon>Embryophyta</taxon>
        <taxon>Tracheophyta</taxon>
        <taxon>Spermatophyta</taxon>
        <taxon>Magnoliopsida</taxon>
        <taxon>eudicotyledons</taxon>
        <taxon>Gunneridae</taxon>
        <taxon>Pentapetalae</taxon>
        <taxon>rosids</taxon>
        <taxon>malvids</taxon>
        <taxon>Brassicales</taxon>
        <taxon>Brassicaceae</taxon>
        <taxon>Camelineae</taxon>
        <taxon>Arabidopsis</taxon>
    </lineage>
</organism>
<dbReference type="EMBL" id="AL132972">
    <property type="protein sequence ID" value="CAC07928.1"/>
    <property type="molecule type" value="Genomic_DNA"/>
</dbReference>
<dbReference type="EMBL" id="CP002686">
    <property type="protein sequence ID" value="AEE78939.1"/>
    <property type="molecule type" value="Genomic_DNA"/>
</dbReference>
<dbReference type="EMBL" id="AK117608">
    <property type="protein sequence ID" value="BAC42264.1"/>
    <property type="molecule type" value="mRNA"/>
</dbReference>
<dbReference type="EMBL" id="BT026127">
    <property type="protein sequence ID" value="ABG48483.1"/>
    <property type="molecule type" value="mRNA"/>
</dbReference>
<dbReference type="PIR" id="T08462">
    <property type="entry name" value="T08462"/>
</dbReference>
<dbReference type="PIR" id="T46107">
    <property type="entry name" value="T46107"/>
</dbReference>
<dbReference type="RefSeq" id="NP_190805.1">
    <property type="nucleotide sequence ID" value="NM_115097.3"/>
</dbReference>
<dbReference type="SMR" id="Q9FT45"/>
<dbReference type="FunCoup" id="Q9FT45">
    <property type="interactions" value="8"/>
</dbReference>
<dbReference type="STRING" id="3702.Q9FT45"/>
<dbReference type="GlyCosmos" id="Q9FT45">
    <property type="glycosylation" value="2 sites, No reported glycans"/>
</dbReference>
<dbReference type="GlyGen" id="Q9FT45">
    <property type="glycosylation" value="2 sites"/>
</dbReference>
<dbReference type="PaxDb" id="3702-AT3G52370.1"/>
<dbReference type="ProteomicsDB" id="230588"/>
<dbReference type="EnsemblPlants" id="AT3G52370.1">
    <property type="protein sequence ID" value="AT3G52370.1"/>
    <property type="gene ID" value="AT3G52370"/>
</dbReference>
<dbReference type="GeneID" id="824402"/>
<dbReference type="Gramene" id="AT3G52370.1">
    <property type="protein sequence ID" value="AT3G52370.1"/>
    <property type="gene ID" value="AT3G52370"/>
</dbReference>
<dbReference type="KEGG" id="ath:AT3G52370"/>
<dbReference type="Araport" id="AT3G52370"/>
<dbReference type="TAIR" id="AT3G52370">
    <property type="gene designation" value="FLA15"/>
</dbReference>
<dbReference type="eggNOG" id="KOG1437">
    <property type="taxonomic scope" value="Eukaryota"/>
</dbReference>
<dbReference type="HOGENOM" id="CLU_047484_0_0_1"/>
<dbReference type="InParanoid" id="Q9FT45"/>
<dbReference type="OrthoDB" id="286301at2759"/>
<dbReference type="PhylomeDB" id="Q9FT45"/>
<dbReference type="PRO" id="PR:Q9FT45"/>
<dbReference type="Proteomes" id="UP000006548">
    <property type="component" value="Chromosome 3"/>
</dbReference>
<dbReference type="ExpressionAtlas" id="Q9FT45">
    <property type="expression patterns" value="baseline and differential"/>
</dbReference>
<dbReference type="GO" id="GO:0005576">
    <property type="term" value="C:extracellular region"/>
    <property type="evidence" value="ECO:0007669"/>
    <property type="project" value="UniProtKB-SubCell"/>
</dbReference>
<dbReference type="FunFam" id="2.30.180.10:FF:000011">
    <property type="entry name" value="Fasciclin-like arabinogalactan protein 16"/>
    <property type="match status" value="1"/>
</dbReference>
<dbReference type="Gene3D" id="2.30.180.10">
    <property type="entry name" value="FAS1 domain"/>
    <property type="match status" value="2"/>
</dbReference>
<dbReference type="InterPro" id="IPR036378">
    <property type="entry name" value="FAS1_dom_sf"/>
</dbReference>
<dbReference type="InterPro" id="IPR000782">
    <property type="entry name" value="FAS1_domain"/>
</dbReference>
<dbReference type="InterPro" id="IPR044654">
    <property type="entry name" value="FLA15/16/17/18"/>
</dbReference>
<dbReference type="PANTHER" id="PTHR32499:SF9">
    <property type="entry name" value="FASCICLIN-LIKE ARABINOGALACTAN PROTEIN 15"/>
    <property type="match status" value="1"/>
</dbReference>
<dbReference type="PANTHER" id="PTHR32499">
    <property type="entry name" value="FASCICLIN-LIKE ARABINOGALACTAN PROTEIN 16"/>
    <property type="match status" value="1"/>
</dbReference>
<dbReference type="Pfam" id="PF02469">
    <property type="entry name" value="Fasciclin"/>
    <property type="match status" value="2"/>
</dbReference>
<dbReference type="SMART" id="SM00554">
    <property type="entry name" value="FAS1"/>
    <property type="match status" value="2"/>
</dbReference>
<dbReference type="SUPFAM" id="SSF82153">
    <property type="entry name" value="FAS1 domain"/>
    <property type="match status" value="2"/>
</dbReference>
<dbReference type="PROSITE" id="PS50213">
    <property type="entry name" value="FAS1"/>
    <property type="match status" value="2"/>
</dbReference>
<protein>
    <recommendedName>
        <fullName>Fasciclin-like arabinogalactan protein 15</fullName>
    </recommendedName>
</protein>
<gene>
    <name type="primary">FLA15</name>
    <name type="ordered locus">At3g52370</name>
    <name type="ORF">T25B15_140</name>
</gene>
<accession>Q9FT45</accession>
<reference key="1">
    <citation type="journal article" date="2000" name="Nature">
        <title>Sequence and analysis of chromosome 3 of the plant Arabidopsis thaliana.</title>
        <authorList>
            <person name="Salanoubat M."/>
            <person name="Lemcke K."/>
            <person name="Rieger M."/>
            <person name="Ansorge W."/>
            <person name="Unseld M."/>
            <person name="Fartmann B."/>
            <person name="Valle G."/>
            <person name="Bloecker H."/>
            <person name="Perez-Alonso M."/>
            <person name="Obermaier B."/>
            <person name="Delseny M."/>
            <person name="Boutry M."/>
            <person name="Grivell L.A."/>
            <person name="Mache R."/>
            <person name="Puigdomenech P."/>
            <person name="De Simone V."/>
            <person name="Choisne N."/>
            <person name="Artiguenave F."/>
            <person name="Robert C."/>
            <person name="Brottier P."/>
            <person name="Wincker P."/>
            <person name="Cattolico L."/>
            <person name="Weissenbach J."/>
            <person name="Saurin W."/>
            <person name="Quetier F."/>
            <person name="Schaefer M."/>
            <person name="Mueller-Auer S."/>
            <person name="Gabel C."/>
            <person name="Fuchs M."/>
            <person name="Benes V."/>
            <person name="Wurmbach E."/>
            <person name="Drzonek H."/>
            <person name="Erfle H."/>
            <person name="Jordan N."/>
            <person name="Bangert S."/>
            <person name="Wiedelmann R."/>
            <person name="Kranz H."/>
            <person name="Voss H."/>
            <person name="Holland R."/>
            <person name="Brandt P."/>
            <person name="Nyakatura G."/>
            <person name="Vezzi A."/>
            <person name="D'Angelo M."/>
            <person name="Pallavicini A."/>
            <person name="Toppo S."/>
            <person name="Simionati B."/>
            <person name="Conrad A."/>
            <person name="Hornischer K."/>
            <person name="Kauer G."/>
            <person name="Loehnert T.-H."/>
            <person name="Nordsiek G."/>
            <person name="Reichelt J."/>
            <person name="Scharfe M."/>
            <person name="Schoen O."/>
            <person name="Bargues M."/>
            <person name="Terol J."/>
            <person name="Climent J."/>
            <person name="Navarro P."/>
            <person name="Collado C."/>
            <person name="Perez-Perez A."/>
            <person name="Ottenwaelder B."/>
            <person name="Duchemin D."/>
            <person name="Cooke R."/>
            <person name="Laudie M."/>
            <person name="Berger-Llauro C."/>
            <person name="Purnelle B."/>
            <person name="Masuy D."/>
            <person name="de Haan M."/>
            <person name="Maarse A.C."/>
            <person name="Alcaraz J.-P."/>
            <person name="Cottet A."/>
            <person name="Casacuberta E."/>
            <person name="Monfort A."/>
            <person name="Argiriou A."/>
            <person name="Flores M."/>
            <person name="Liguori R."/>
            <person name="Vitale D."/>
            <person name="Mannhaupt G."/>
            <person name="Haase D."/>
            <person name="Schoof H."/>
            <person name="Rudd S."/>
            <person name="Zaccaria P."/>
            <person name="Mewes H.-W."/>
            <person name="Mayer K.F.X."/>
            <person name="Kaul S."/>
            <person name="Town C.D."/>
            <person name="Koo H.L."/>
            <person name="Tallon L.J."/>
            <person name="Jenkins J."/>
            <person name="Rooney T."/>
            <person name="Rizzo M."/>
            <person name="Walts A."/>
            <person name="Utterback T."/>
            <person name="Fujii C.Y."/>
            <person name="Shea T.P."/>
            <person name="Creasy T.H."/>
            <person name="Haas B."/>
            <person name="Maiti R."/>
            <person name="Wu D."/>
            <person name="Peterson J."/>
            <person name="Van Aken S."/>
            <person name="Pai G."/>
            <person name="Militscher J."/>
            <person name="Sellers P."/>
            <person name="Gill J.E."/>
            <person name="Feldblyum T.V."/>
            <person name="Preuss D."/>
            <person name="Lin X."/>
            <person name="Nierman W.C."/>
            <person name="Salzberg S.L."/>
            <person name="White O."/>
            <person name="Venter J.C."/>
            <person name="Fraser C.M."/>
            <person name="Kaneko T."/>
            <person name="Nakamura Y."/>
            <person name="Sato S."/>
            <person name="Kato T."/>
            <person name="Asamizu E."/>
            <person name="Sasamoto S."/>
            <person name="Kimura T."/>
            <person name="Idesawa K."/>
            <person name="Kawashima K."/>
            <person name="Kishida Y."/>
            <person name="Kiyokawa C."/>
            <person name="Kohara M."/>
            <person name="Matsumoto M."/>
            <person name="Matsuno A."/>
            <person name="Muraki A."/>
            <person name="Nakayama S."/>
            <person name="Nakazaki N."/>
            <person name="Shinpo S."/>
            <person name="Takeuchi C."/>
            <person name="Wada T."/>
            <person name="Watanabe A."/>
            <person name="Yamada M."/>
            <person name="Yasuda M."/>
            <person name="Tabata S."/>
        </authorList>
    </citation>
    <scope>NUCLEOTIDE SEQUENCE [LARGE SCALE GENOMIC DNA]</scope>
    <source>
        <strain>cv. Columbia</strain>
    </source>
</reference>
<reference key="2">
    <citation type="journal article" date="2017" name="Plant J.">
        <title>Araport11: a complete reannotation of the Arabidopsis thaliana reference genome.</title>
        <authorList>
            <person name="Cheng C.Y."/>
            <person name="Krishnakumar V."/>
            <person name="Chan A.P."/>
            <person name="Thibaud-Nissen F."/>
            <person name="Schobel S."/>
            <person name="Town C.D."/>
        </authorList>
    </citation>
    <scope>GENOME REANNOTATION</scope>
    <source>
        <strain>cv. Columbia</strain>
    </source>
</reference>
<reference key="3">
    <citation type="journal article" date="2002" name="Science">
        <title>Functional annotation of a full-length Arabidopsis cDNA collection.</title>
        <authorList>
            <person name="Seki M."/>
            <person name="Narusaka M."/>
            <person name="Kamiya A."/>
            <person name="Ishida J."/>
            <person name="Satou M."/>
            <person name="Sakurai T."/>
            <person name="Nakajima M."/>
            <person name="Enju A."/>
            <person name="Akiyama K."/>
            <person name="Oono Y."/>
            <person name="Muramatsu M."/>
            <person name="Hayashizaki Y."/>
            <person name="Kawai J."/>
            <person name="Carninci P."/>
            <person name="Itoh M."/>
            <person name="Ishii Y."/>
            <person name="Arakawa T."/>
            <person name="Shibata K."/>
            <person name="Shinagawa A."/>
            <person name="Shinozaki K."/>
        </authorList>
    </citation>
    <scope>NUCLEOTIDE SEQUENCE [LARGE SCALE MRNA]</scope>
    <source>
        <strain>cv. Columbia</strain>
    </source>
</reference>
<reference key="4">
    <citation type="submission" date="2006-07" db="EMBL/GenBank/DDBJ databases">
        <title>Arabidopsis ORF clones.</title>
        <authorList>
            <person name="Kim C.J."/>
            <person name="Chen H."/>
            <person name="Quinitio C."/>
            <person name="Shinn P."/>
            <person name="Ecker J.R."/>
        </authorList>
    </citation>
    <scope>NUCLEOTIDE SEQUENCE [LARGE SCALE MRNA]</scope>
    <source>
        <strain>cv. Columbia</strain>
    </source>
</reference>
<reference key="5">
    <citation type="journal article" date="2003" name="Plant Physiol.">
        <title>The fasciclin-like arabinogalactan proteins of Arabidopsis. A multigene family of putative cell adhesion molecules.</title>
        <authorList>
            <person name="Johnson K.L."/>
            <person name="Jones B.J."/>
            <person name="Bacic A."/>
            <person name="Schultz C.J."/>
        </authorList>
    </citation>
    <scope>GENE FAMILY ORGANIZATION</scope>
    <scope>NOMENCLATURE</scope>
</reference>
<keyword id="KW-0325">Glycoprotein</keyword>
<keyword id="KW-0654">Proteoglycan</keyword>
<keyword id="KW-1185">Reference proteome</keyword>
<keyword id="KW-0677">Repeat</keyword>
<keyword id="KW-0964">Secreted</keyword>
<keyword id="KW-0732">Signal</keyword>
<feature type="signal peptide" evidence="1">
    <location>
        <begin position="1"/>
        <end position="20"/>
    </location>
</feature>
<feature type="chain" id="PRO_0000253875" description="Fasciclin-like arabinogalactan protein 15">
    <location>
        <begin position="21"/>
        <end position="436"/>
    </location>
</feature>
<feature type="domain" description="FAS1 1" evidence="2">
    <location>
        <begin position="31"/>
        <end position="165"/>
    </location>
</feature>
<feature type="domain" description="FAS1 2" evidence="2">
    <location>
        <begin position="249"/>
        <end position="392"/>
    </location>
</feature>
<feature type="glycosylation site" description="N-linked (GlcNAc...) asparagine" evidence="1">
    <location>
        <position position="68"/>
    </location>
</feature>
<feature type="glycosylation site" description="N-linked (GlcNAc...) asparagine" evidence="1">
    <location>
        <position position="271"/>
    </location>
</feature>
<proteinExistence type="evidence at transcript level"/>
<comment type="function">
    <text>May be a cell surface adhesion protein.</text>
</comment>
<comment type="subcellular location">
    <subcellularLocation>
        <location evidence="3">Secreted</location>
    </subcellularLocation>
</comment>
<comment type="similarity">
    <text evidence="3">Belongs to the fasciclin-like AGP family.</text>
</comment>
<evidence type="ECO:0000255" key="1"/>
<evidence type="ECO:0000255" key="2">
    <source>
        <dbReference type="PROSITE-ProRule" id="PRU00082"/>
    </source>
</evidence>
<evidence type="ECO:0000305" key="3"/>
<name>FLA15_ARATH</name>
<sequence>MDDLSKLLFFLLLTISITTALPDKPGSGQINSNSVLVALLDSHYTELAELVEKALLLQTLEEAVGQHNITIFAPRNDALEKNLDPEFKSFLLQPKNLKSLQSLLMFHILPKRITSPQFSSAVVSHRTLSNDHLHFTNGKVNSAEITKPDDLTRPDGIIHGIERLLIPRSVQEDFNRRRSLRSIAAVLPEGAPEVDPRTHRLKKKPAPIPAGAPPVLPVYDAMSPGPSLAPAPAPGPGGPRHHFNGEAQVKDFIHTLLHYGGYNEMADILVNLTSLATEMGRLVSEGYVLTVLAPNDEAMAKLTTDQLSEPGAPEQIMYYHIIPEYQTEESMYNSVRRFGKIRYDSLRFPHKVEAQEADGSVKFGHGDGSAYLFDPDIYTDGRISVQGIDGVLFPEEKTPVEKKTGVPVVKKAPKPRRGKLMEVACTMLGSQFPTCQ</sequence>